<organism>
    <name type="scientific">Cereibacter sphaeroides (strain ATCC 17023 / DSM 158 / JCM 6121 / CCUG 31486 / LMG 2827 / NBRC 12203 / NCIMB 8253 / ATH 2.4.1.)</name>
    <name type="common">Rhodobacter sphaeroides</name>
    <dbReference type="NCBI Taxonomy" id="272943"/>
    <lineage>
        <taxon>Bacteria</taxon>
        <taxon>Pseudomonadati</taxon>
        <taxon>Pseudomonadota</taxon>
        <taxon>Alphaproteobacteria</taxon>
        <taxon>Rhodobacterales</taxon>
        <taxon>Paracoccaceae</taxon>
        <taxon>Cereibacter</taxon>
    </lineage>
</organism>
<comment type="function">
    <text evidence="1">Acts as a chaperone.</text>
</comment>
<comment type="induction">
    <text evidence="1">By stress conditions e.g. heat shock.</text>
</comment>
<comment type="similarity">
    <text evidence="1">Belongs to the heat shock protein 70 family.</text>
</comment>
<accession>Q3IYM7</accession>
<protein>
    <recommendedName>
        <fullName evidence="1">Chaperone protein DnaK</fullName>
    </recommendedName>
    <alternativeName>
        <fullName evidence="1">HSP70</fullName>
    </alternativeName>
    <alternativeName>
        <fullName evidence="1">Heat shock 70 kDa protein</fullName>
    </alternativeName>
    <alternativeName>
        <fullName evidence="1">Heat shock protein 70</fullName>
    </alternativeName>
</protein>
<name>DNAK_CERS4</name>
<feature type="chain" id="PRO_0000226002" description="Chaperone protein DnaK">
    <location>
        <begin position="1"/>
        <end position="636"/>
    </location>
</feature>
<feature type="region of interest" description="Disordered" evidence="2">
    <location>
        <begin position="602"/>
        <end position="636"/>
    </location>
</feature>
<feature type="compositionally biased region" description="Acidic residues" evidence="2">
    <location>
        <begin position="620"/>
        <end position="630"/>
    </location>
</feature>
<feature type="modified residue" description="Phosphothreonine; by autocatalysis" evidence="1">
    <location>
        <position position="197"/>
    </location>
</feature>
<sequence>MAKVIGIDLGTTNSCVAIMDGAQPRVIENSEGARTTPSIVGFTDSERLVGQPAKRQAVTNPSNTVFAVKRLIGRRVGDAEVEKDKKLVPYSIVNGGNGDAWVEVRGEKYSPSQISAFILQKMKETAEAYLGESVTQAVITVPAYFNDAQRQATKDAGKIAGLEVLRIINEPTAAALAYGLDKKDTKTIAVYDLGGGTFDITILEIDDGLFEVKSTNGDTFLGGEDFDMRIVNYLADEFKKEHGVDLTLDKMALQRLKEAAEKAKIELSSSQQTEINQPFISMDRNTGQPLHMVMKLTRAKLESLVGDLIKKSLKPCEAALKDAGVSKSDIDEVVLVGGMTRMPRVVEEVTKFFGKEPHKGVNPDEVVALGAAIQAGVLQGDVKDVVLLDVTPLSLGIETLGGVFTRLIDRNTTIPTKKSQVFSTAEDNQNAVTIRVFQGEREMAADNKLLGQFNLEDIPPAPRGMPQIEVTFDIDANGIVSVSAKDKGTGKSQNITIQASGGLSDEDIEKMVRDAEANAEADKKRRELVETKNQGESLLHSTRKSIEEHGDKVDPSTVEAIELAMGALEEALKSEDAGKIKGGIQNLTEAAMRLGEAIYKASQAEGGATPDEEGPRSVDDDIVDADFEDLGENKRK</sequence>
<keyword id="KW-0067">ATP-binding</keyword>
<keyword id="KW-0143">Chaperone</keyword>
<keyword id="KW-0547">Nucleotide-binding</keyword>
<keyword id="KW-0597">Phosphoprotein</keyword>
<keyword id="KW-1185">Reference proteome</keyword>
<keyword id="KW-0346">Stress response</keyword>
<reference key="1">
    <citation type="submission" date="2005-09" db="EMBL/GenBank/DDBJ databases">
        <title>Complete sequence of chromosome 1 of Rhodobacter sphaeroides 2.4.1.</title>
        <authorList>
            <person name="Copeland A."/>
            <person name="Lucas S."/>
            <person name="Lapidus A."/>
            <person name="Barry K."/>
            <person name="Detter J.C."/>
            <person name="Glavina T."/>
            <person name="Hammon N."/>
            <person name="Israni S."/>
            <person name="Pitluck S."/>
            <person name="Richardson P."/>
            <person name="Mackenzie C."/>
            <person name="Choudhary M."/>
            <person name="Larimer F."/>
            <person name="Hauser L.J."/>
            <person name="Land M."/>
            <person name="Donohue T.J."/>
            <person name="Kaplan S."/>
        </authorList>
    </citation>
    <scope>NUCLEOTIDE SEQUENCE [LARGE SCALE GENOMIC DNA]</scope>
    <source>
        <strain>ATCC 17023 / DSM 158 / JCM 6121 / CCUG 31486 / LMG 2827 / NBRC 12203 / NCIMB 8253 / ATH 2.4.1.</strain>
    </source>
</reference>
<dbReference type="EMBL" id="CP000143">
    <property type="protein sequence ID" value="ABA80357.1"/>
    <property type="molecule type" value="Genomic_DNA"/>
</dbReference>
<dbReference type="RefSeq" id="WP_002721635.1">
    <property type="nucleotide sequence ID" value="NZ_CP030271.1"/>
</dbReference>
<dbReference type="RefSeq" id="YP_354258.1">
    <property type="nucleotide sequence ID" value="NC_007493.2"/>
</dbReference>
<dbReference type="SMR" id="Q3IYM7"/>
<dbReference type="STRING" id="272943.RSP_1173"/>
<dbReference type="EnsemblBacteria" id="ABA80357">
    <property type="protein sequence ID" value="ABA80357"/>
    <property type="gene ID" value="RSP_1173"/>
</dbReference>
<dbReference type="GeneID" id="3718166"/>
<dbReference type="KEGG" id="rsp:RSP_1173"/>
<dbReference type="PATRIC" id="fig|272943.9.peg.3152"/>
<dbReference type="eggNOG" id="COG0443">
    <property type="taxonomic scope" value="Bacteria"/>
</dbReference>
<dbReference type="OrthoDB" id="9766019at2"/>
<dbReference type="PhylomeDB" id="Q3IYM7"/>
<dbReference type="Proteomes" id="UP000002703">
    <property type="component" value="Chromosome 1"/>
</dbReference>
<dbReference type="GO" id="GO:0005524">
    <property type="term" value="F:ATP binding"/>
    <property type="evidence" value="ECO:0007669"/>
    <property type="project" value="UniProtKB-UniRule"/>
</dbReference>
<dbReference type="GO" id="GO:0140662">
    <property type="term" value="F:ATP-dependent protein folding chaperone"/>
    <property type="evidence" value="ECO:0007669"/>
    <property type="project" value="InterPro"/>
</dbReference>
<dbReference type="GO" id="GO:0051082">
    <property type="term" value="F:unfolded protein binding"/>
    <property type="evidence" value="ECO:0007669"/>
    <property type="project" value="InterPro"/>
</dbReference>
<dbReference type="CDD" id="cd11733">
    <property type="entry name" value="ASKHA_NBD_HSP70_HSPA9"/>
    <property type="match status" value="1"/>
</dbReference>
<dbReference type="FunFam" id="2.60.34.10:FF:000014">
    <property type="entry name" value="Chaperone protein DnaK HSP70"/>
    <property type="match status" value="1"/>
</dbReference>
<dbReference type="FunFam" id="1.20.1270.10:FF:000001">
    <property type="entry name" value="Molecular chaperone DnaK"/>
    <property type="match status" value="1"/>
</dbReference>
<dbReference type="FunFam" id="3.30.420.40:FF:000004">
    <property type="entry name" value="Molecular chaperone DnaK"/>
    <property type="match status" value="1"/>
</dbReference>
<dbReference type="FunFam" id="3.90.640.10:FF:000003">
    <property type="entry name" value="Molecular chaperone DnaK"/>
    <property type="match status" value="1"/>
</dbReference>
<dbReference type="Gene3D" id="1.20.1270.10">
    <property type="match status" value="1"/>
</dbReference>
<dbReference type="Gene3D" id="3.30.420.40">
    <property type="match status" value="2"/>
</dbReference>
<dbReference type="Gene3D" id="3.90.640.10">
    <property type="entry name" value="Actin, Chain A, domain 4"/>
    <property type="match status" value="1"/>
</dbReference>
<dbReference type="Gene3D" id="2.60.34.10">
    <property type="entry name" value="Substrate Binding Domain Of DNAk, Chain A, domain 1"/>
    <property type="match status" value="1"/>
</dbReference>
<dbReference type="HAMAP" id="MF_00332">
    <property type="entry name" value="DnaK"/>
    <property type="match status" value="1"/>
</dbReference>
<dbReference type="InterPro" id="IPR043129">
    <property type="entry name" value="ATPase_NBD"/>
</dbReference>
<dbReference type="InterPro" id="IPR012725">
    <property type="entry name" value="Chaperone_DnaK"/>
</dbReference>
<dbReference type="InterPro" id="IPR018181">
    <property type="entry name" value="Heat_shock_70_CS"/>
</dbReference>
<dbReference type="InterPro" id="IPR029048">
    <property type="entry name" value="HSP70_C_sf"/>
</dbReference>
<dbReference type="InterPro" id="IPR029047">
    <property type="entry name" value="HSP70_peptide-bd_sf"/>
</dbReference>
<dbReference type="InterPro" id="IPR013126">
    <property type="entry name" value="Hsp_70_fam"/>
</dbReference>
<dbReference type="NCBIfam" id="NF001413">
    <property type="entry name" value="PRK00290.1"/>
    <property type="match status" value="1"/>
</dbReference>
<dbReference type="NCBIfam" id="NF003520">
    <property type="entry name" value="PRK05183.1"/>
    <property type="match status" value="1"/>
</dbReference>
<dbReference type="NCBIfam" id="TIGR02350">
    <property type="entry name" value="prok_dnaK"/>
    <property type="match status" value="1"/>
</dbReference>
<dbReference type="PANTHER" id="PTHR19375">
    <property type="entry name" value="HEAT SHOCK PROTEIN 70KDA"/>
    <property type="match status" value="1"/>
</dbReference>
<dbReference type="Pfam" id="PF00012">
    <property type="entry name" value="HSP70"/>
    <property type="match status" value="1"/>
</dbReference>
<dbReference type="PRINTS" id="PR00301">
    <property type="entry name" value="HEATSHOCK70"/>
</dbReference>
<dbReference type="SUPFAM" id="SSF53067">
    <property type="entry name" value="Actin-like ATPase domain"/>
    <property type="match status" value="2"/>
</dbReference>
<dbReference type="SUPFAM" id="SSF100934">
    <property type="entry name" value="Heat shock protein 70kD (HSP70), C-terminal subdomain"/>
    <property type="match status" value="1"/>
</dbReference>
<dbReference type="SUPFAM" id="SSF100920">
    <property type="entry name" value="Heat shock protein 70kD (HSP70), peptide-binding domain"/>
    <property type="match status" value="1"/>
</dbReference>
<dbReference type="PROSITE" id="PS00297">
    <property type="entry name" value="HSP70_1"/>
    <property type="match status" value="1"/>
</dbReference>
<dbReference type="PROSITE" id="PS00329">
    <property type="entry name" value="HSP70_2"/>
    <property type="match status" value="1"/>
</dbReference>
<dbReference type="PROSITE" id="PS01036">
    <property type="entry name" value="HSP70_3"/>
    <property type="match status" value="1"/>
</dbReference>
<evidence type="ECO:0000255" key="1">
    <source>
        <dbReference type="HAMAP-Rule" id="MF_00332"/>
    </source>
</evidence>
<evidence type="ECO:0000256" key="2">
    <source>
        <dbReference type="SAM" id="MobiDB-lite"/>
    </source>
</evidence>
<gene>
    <name evidence="1" type="primary">dnaK</name>
    <name type="ordered locus">RHOS4_27890</name>
    <name type="ORF">RSP_1173</name>
</gene>
<proteinExistence type="inferred from homology"/>